<gene>
    <name type="ordered locus">CTA_0658</name>
</gene>
<comment type="function">
    <text evidence="1">Pyrophosphatase that catalyzes the hydrolysis of nucleoside triphosphates to their monophosphate derivatives, with a high preference for the non-canonical purine nucleotides XTP (xanthosine triphosphate), dITP (deoxyinosine triphosphate) and ITP. Seems to function as a house-cleaning enzyme that removes non-canonical purine nucleotides from the nucleotide pool, thus preventing their incorporation into DNA/RNA and avoiding chromosomal lesions.</text>
</comment>
<comment type="catalytic activity">
    <reaction evidence="1">
        <text>XTP + H2O = XMP + diphosphate + H(+)</text>
        <dbReference type="Rhea" id="RHEA:28610"/>
        <dbReference type="ChEBI" id="CHEBI:15377"/>
        <dbReference type="ChEBI" id="CHEBI:15378"/>
        <dbReference type="ChEBI" id="CHEBI:33019"/>
        <dbReference type="ChEBI" id="CHEBI:57464"/>
        <dbReference type="ChEBI" id="CHEBI:61314"/>
        <dbReference type="EC" id="3.6.1.66"/>
    </reaction>
</comment>
<comment type="catalytic activity">
    <reaction evidence="1">
        <text>dITP + H2O = dIMP + diphosphate + H(+)</text>
        <dbReference type="Rhea" id="RHEA:28342"/>
        <dbReference type="ChEBI" id="CHEBI:15377"/>
        <dbReference type="ChEBI" id="CHEBI:15378"/>
        <dbReference type="ChEBI" id="CHEBI:33019"/>
        <dbReference type="ChEBI" id="CHEBI:61194"/>
        <dbReference type="ChEBI" id="CHEBI:61382"/>
        <dbReference type="EC" id="3.6.1.66"/>
    </reaction>
</comment>
<comment type="catalytic activity">
    <reaction evidence="1">
        <text>ITP + H2O = IMP + diphosphate + H(+)</text>
        <dbReference type="Rhea" id="RHEA:29399"/>
        <dbReference type="ChEBI" id="CHEBI:15377"/>
        <dbReference type="ChEBI" id="CHEBI:15378"/>
        <dbReference type="ChEBI" id="CHEBI:33019"/>
        <dbReference type="ChEBI" id="CHEBI:58053"/>
        <dbReference type="ChEBI" id="CHEBI:61402"/>
        <dbReference type="EC" id="3.6.1.66"/>
    </reaction>
</comment>
<comment type="cofactor">
    <cofactor evidence="1">
        <name>Mg(2+)</name>
        <dbReference type="ChEBI" id="CHEBI:18420"/>
    </cofactor>
    <text evidence="1">Binds 1 Mg(2+) ion per subunit.</text>
</comment>
<comment type="subunit">
    <text evidence="1">Homodimer.</text>
</comment>
<comment type="similarity">
    <text evidence="1">Belongs to the HAM1 NTPase family.</text>
</comment>
<proteinExistence type="inferred from homology"/>
<dbReference type="EC" id="3.6.1.66" evidence="1"/>
<dbReference type="EMBL" id="CP000051">
    <property type="protein sequence ID" value="AAX50882.1"/>
    <property type="molecule type" value="Genomic_DNA"/>
</dbReference>
<dbReference type="RefSeq" id="WP_009871973.1">
    <property type="nucleotide sequence ID" value="NC_007429.1"/>
</dbReference>
<dbReference type="SMR" id="Q3KL90"/>
<dbReference type="KEGG" id="cta:CTA_0658"/>
<dbReference type="HOGENOM" id="CLU_082080_0_2_0"/>
<dbReference type="Proteomes" id="UP000002532">
    <property type="component" value="Chromosome"/>
</dbReference>
<dbReference type="GO" id="GO:0005829">
    <property type="term" value="C:cytosol"/>
    <property type="evidence" value="ECO:0007669"/>
    <property type="project" value="TreeGrafter"/>
</dbReference>
<dbReference type="GO" id="GO:0035870">
    <property type="term" value="F:dITP diphosphatase activity"/>
    <property type="evidence" value="ECO:0007669"/>
    <property type="project" value="RHEA"/>
</dbReference>
<dbReference type="GO" id="GO:0036220">
    <property type="term" value="F:ITP diphosphatase activity"/>
    <property type="evidence" value="ECO:0007669"/>
    <property type="project" value="UniProtKB-EC"/>
</dbReference>
<dbReference type="GO" id="GO:0046872">
    <property type="term" value="F:metal ion binding"/>
    <property type="evidence" value="ECO:0007669"/>
    <property type="project" value="UniProtKB-KW"/>
</dbReference>
<dbReference type="GO" id="GO:0000166">
    <property type="term" value="F:nucleotide binding"/>
    <property type="evidence" value="ECO:0007669"/>
    <property type="project" value="UniProtKB-KW"/>
</dbReference>
<dbReference type="GO" id="GO:0017111">
    <property type="term" value="F:ribonucleoside triphosphate phosphatase activity"/>
    <property type="evidence" value="ECO:0007669"/>
    <property type="project" value="InterPro"/>
</dbReference>
<dbReference type="GO" id="GO:0036222">
    <property type="term" value="F:XTP diphosphatase activity"/>
    <property type="evidence" value="ECO:0007669"/>
    <property type="project" value="RHEA"/>
</dbReference>
<dbReference type="GO" id="GO:0009117">
    <property type="term" value="P:nucleotide metabolic process"/>
    <property type="evidence" value="ECO:0007669"/>
    <property type="project" value="UniProtKB-KW"/>
</dbReference>
<dbReference type="GO" id="GO:0009146">
    <property type="term" value="P:purine nucleoside triphosphate catabolic process"/>
    <property type="evidence" value="ECO:0007669"/>
    <property type="project" value="UniProtKB-UniRule"/>
</dbReference>
<dbReference type="CDD" id="cd00515">
    <property type="entry name" value="HAM1"/>
    <property type="match status" value="1"/>
</dbReference>
<dbReference type="FunFam" id="3.90.950.10:FF:000001">
    <property type="entry name" value="dITP/XTP pyrophosphatase"/>
    <property type="match status" value="1"/>
</dbReference>
<dbReference type="Gene3D" id="3.90.950.10">
    <property type="match status" value="1"/>
</dbReference>
<dbReference type="HAMAP" id="MF_01405">
    <property type="entry name" value="Non_canon_purine_NTPase"/>
    <property type="match status" value="1"/>
</dbReference>
<dbReference type="InterPro" id="IPR020922">
    <property type="entry name" value="dITP/XTP_pyrophosphatase"/>
</dbReference>
<dbReference type="InterPro" id="IPR029001">
    <property type="entry name" value="ITPase-like_fam"/>
</dbReference>
<dbReference type="InterPro" id="IPR002637">
    <property type="entry name" value="RdgB/HAM1"/>
</dbReference>
<dbReference type="PANTHER" id="PTHR11067:SF9">
    <property type="entry name" value="INOSINE TRIPHOSPHATE PYROPHOSPHATASE"/>
    <property type="match status" value="1"/>
</dbReference>
<dbReference type="PANTHER" id="PTHR11067">
    <property type="entry name" value="INOSINE TRIPHOSPHATE PYROPHOSPHATASE/HAM1 PROTEIN"/>
    <property type="match status" value="1"/>
</dbReference>
<dbReference type="Pfam" id="PF01725">
    <property type="entry name" value="Ham1p_like"/>
    <property type="match status" value="1"/>
</dbReference>
<dbReference type="SUPFAM" id="SSF52972">
    <property type="entry name" value="ITPase-like"/>
    <property type="match status" value="1"/>
</dbReference>
<organism>
    <name type="scientific">Chlamydia trachomatis serovar A (strain ATCC VR-571B / DSM 19440 / HAR-13)</name>
    <dbReference type="NCBI Taxonomy" id="315277"/>
    <lineage>
        <taxon>Bacteria</taxon>
        <taxon>Pseudomonadati</taxon>
        <taxon>Chlamydiota</taxon>
        <taxon>Chlamydiia</taxon>
        <taxon>Chlamydiales</taxon>
        <taxon>Chlamydiaceae</taxon>
        <taxon>Chlamydia/Chlamydophila group</taxon>
        <taxon>Chlamydia</taxon>
    </lineage>
</organism>
<evidence type="ECO:0000255" key="1">
    <source>
        <dbReference type="HAMAP-Rule" id="MF_01405"/>
    </source>
</evidence>
<sequence length="209" mass="23315">MKILIASSHGYKVRETKVFLKKLGEFDIFSLVDYPSYHPPKETGETPEENAIQKGLFAAQTFRCWTIADDSMLIIPALGGLPGKLSASFAGEQANDKDHRKKLLENMRLLENTIDRSAYFECCVALISPFGKIFKAHASCEGTIAFEERGSSGFGYDPLFVKHDYKQTYAELPEAIKNQVSHRAKALVKLQPYVETVLANHLLAGKESL</sequence>
<keyword id="KW-0378">Hydrolase</keyword>
<keyword id="KW-0460">Magnesium</keyword>
<keyword id="KW-0479">Metal-binding</keyword>
<keyword id="KW-0546">Nucleotide metabolism</keyword>
<keyword id="KW-0547">Nucleotide-binding</keyword>
<feature type="chain" id="PRO_1000068417" description="dITP/XTP pyrophosphatase">
    <location>
        <begin position="1"/>
        <end position="209"/>
    </location>
</feature>
<feature type="active site" description="Proton acceptor" evidence="1">
    <location>
        <position position="70"/>
    </location>
</feature>
<feature type="binding site" evidence="1">
    <location>
        <begin position="7"/>
        <end position="12"/>
    </location>
    <ligand>
        <name>substrate</name>
    </ligand>
</feature>
<feature type="binding site" evidence="1">
    <location>
        <position position="70"/>
    </location>
    <ligand>
        <name>Mg(2+)</name>
        <dbReference type="ChEBI" id="CHEBI:18420"/>
    </ligand>
</feature>
<feature type="binding site" evidence="1">
    <location>
        <position position="71"/>
    </location>
    <ligand>
        <name>substrate</name>
    </ligand>
</feature>
<feature type="binding site" evidence="1">
    <location>
        <begin position="154"/>
        <end position="157"/>
    </location>
    <ligand>
        <name>substrate</name>
    </ligand>
</feature>
<feature type="binding site" evidence="1">
    <location>
        <position position="177"/>
    </location>
    <ligand>
        <name>substrate</name>
    </ligand>
</feature>
<feature type="binding site" evidence="1">
    <location>
        <begin position="182"/>
        <end position="183"/>
    </location>
    <ligand>
        <name>substrate</name>
    </ligand>
</feature>
<name>IXTPA_CHLTA</name>
<accession>Q3KL90</accession>
<protein>
    <recommendedName>
        <fullName evidence="1">dITP/XTP pyrophosphatase</fullName>
        <ecNumber evidence="1">3.6.1.66</ecNumber>
    </recommendedName>
    <alternativeName>
        <fullName evidence="1">Non-canonical purine NTP pyrophosphatase</fullName>
    </alternativeName>
    <alternativeName>
        <fullName evidence="1">Non-standard purine NTP pyrophosphatase</fullName>
    </alternativeName>
    <alternativeName>
        <fullName evidence="1">Nucleoside-triphosphate diphosphatase</fullName>
    </alternativeName>
    <alternativeName>
        <fullName evidence="1">Nucleoside-triphosphate pyrophosphatase</fullName>
        <shortName evidence="1">NTPase</shortName>
    </alternativeName>
</protein>
<reference key="1">
    <citation type="journal article" date="2005" name="Infect. Immun.">
        <title>Comparative genomic analysis of Chlamydia trachomatis oculotropic and genitotropic strains.</title>
        <authorList>
            <person name="Carlson J.H."/>
            <person name="Porcella S.F."/>
            <person name="McClarty G."/>
            <person name="Caldwell H.D."/>
        </authorList>
    </citation>
    <scope>NUCLEOTIDE SEQUENCE [LARGE SCALE GENOMIC DNA]</scope>
    <source>
        <strain>ATCC VR-571B / DSM 19440 / HAR-13</strain>
    </source>
</reference>